<reference key="1">
    <citation type="journal article" date="1995" name="Science">
        <title>The white gene of Ceratitis capitata: a phenotypic marker for germline transformation.</title>
        <authorList>
            <person name="Zwiebel L.J."/>
            <person name="Saccone G."/>
            <person name="Zacharopoulou A."/>
            <person name="Besansky N.J."/>
            <person name="Favia G."/>
            <person name="Collins F.H."/>
            <person name="Louis C."/>
            <person name="Kafatos F.C."/>
        </authorList>
    </citation>
    <scope>NUCLEOTIDE SEQUENCE [MRNA]</scope>
</reference>
<protein>
    <recommendedName>
        <fullName>Protein white</fullName>
    </recommendedName>
</protein>
<proteinExistence type="evidence at transcript level"/>
<accession>Q17320</accession>
<name>WHITE_CERCA</name>
<gene>
    <name type="primary">W</name>
</gene>
<sequence>MGQEDQEVLIRGGKATSTSAESLNNNNEQPYEQSSINQGFCKNYGTLSPPSPALTADNLTYSWYNLDVFGAVHQPGSSWKQLVNRVKGVFCNERHIPAPRKHLLKNDSGVAYPGELLAVMGSSGAGKTTLLNASAFRSSKGVQISPSTIRMLNGHPVDAKEMQARCAYVQQDDLFIGSLTAREHLIFQAMVRMPRHMTQKQKVQRVDQVIQDLSLGKCQNTLIGVPGRVKGLSGGERKRLAFASEALTDPPLLICDEPTSGLDSFMAHSVVQVLKKLSQKGKTVILTIHQPSSELFELFDKILLMAEGRVAFLGTPGEAVDFFSYIGATCPTNYTPADFYVQVLAVVPGREVESRDRVAKICDNFAVGKVSREMEQNFQKLVKSNGFGKEDENEYTYKASWFMQFRAVLWRSWLSVLKEPLLVKVRLLQTTMVAVLIGLIFLGQQLTQVGVMNINGAIFLFLTNMTFQNSFATITVFTTELPVFMRETRSRLYRCDTYFLGKTIAELPLFLVVPFLFTAIAYPLIGLRPGVDHFFTALALVTLVANVSTSFGYLISCACSSTSMALSVGPPVIIPFLLFGGFFLNSGSVPVYFKWLSYLSWFRYANEGLLINQWADVKPGEITCTLSNTTCPSSGEVILETLNFSASDLPFDFIGLALLIVGFRISAYIALTMRARRKE</sequence>
<comment type="function">
    <text>May be part of a membrane-spanning permease system necessary for the transport of pigment precursors into pigment cells responsible for eye color.</text>
</comment>
<comment type="subcellular location">
    <subcellularLocation>
        <location>Membrane</location>
        <topology>Multi-pass membrane protein</topology>
    </subcellularLocation>
</comment>
<comment type="similarity">
    <text evidence="4">Belongs to the ABC transporter superfamily. ABCG family. Eye pigment precursor importer (TC 3.A.1.204) subfamily.</text>
</comment>
<evidence type="ECO:0000255" key="1"/>
<evidence type="ECO:0000255" key="2">
    <source>
        <dbReference type="PROSITE-ProRule" id="PRU00434"/>
    </source>
</evidence>
<evidence type="ECO:0000256" key="3">
    <source>
        <dbReference type="SAM" id="MobiDB-lite"/>
    </source>
</evidence>
<evidence type="ECO:0000305" key="4"/>
<dbReference type="EMBL" id="X89933">
    <property type="protein sequence ID" value="CAA61998.1"/>
    <property type="molecule type" value="mRNA"/>
</dbReference>
<dbReference type="RefSeq" id="NP_001266294.1">
    <property type="nucleotide sequence ID" value="NM_001279365.1"/>
</dbReference>
<dbReference type="SMR" id="Q17320"/>
<dbReference type="GlyCosmos" id="Q17320">
    <property type="glycosylation" value="2 sites, No reported glycans"/>
</dbReference>
<dbReference type="EnsemblMetazoa" id="NM_001279365.1">
    <property type="protein sequence ID" value="NP_001266294.1"/>
    <property type="gene ID" value="GeneID_101458180"/>
</dbReference>
<dbReference type="GeneID" id="101458180"/>
<dbReference type="KEGG" id="ccat:101458180"/>
<dbReference type="CTD" id="31271"/>
<dbReference type="OrthoDB" id="66620at2759"/>
<dbReference type="GO" id="GO:0030659">
    <property type="term" value="C:cytoplasmic vesicle membrane"/>
    <property type="evidence" value="ECO:0007669"/>
    <property type="project" value="TreeGrafter"/>
</dbReference>
<dbReference type="GO" id="GO:0005886">
    <property type="term" value="C:plasma membrane"/>
    <property type="evidence" value="ECO:0007669"/>
    <property type="project" value="TreeGrafter"/>
</dbReference>
<dbReference type="GO" id="GO:0140359">
    <property type="term" value="F:ABC-type transporter activity"/>
    <property type="evidence" value="ECO:0007669"/>
    <property type="project" value="InterPro"/>
</dbReference>
<dbReference type="GO" id="GO:0005524">
    <property type="term" value="F:ATP binding"/>
    <property type="evidence" value="ECO:0007669"/>
    <property type="project" value="UniProtKB-KW"/>
</dbReference>
<dbReference type="GO" id="GO:0016887">
    <property type="term" value="F:ATP hydrolysis activity"/>
    <property type="evidence" value="ECO:0007669"/>
    <property type="project" value="InterPro"/>
</dbReference>
<dbReference type="GO" id="GO:0031409">
    <property type="term" value="F:pigment binding"/>
    <property type="evidence" value="ECO:0007669"/>
    <property type="project" value="UniProtKB-KW"/>
</dbReference>
<dbReference type="FunFam" id="3.40.50.300:FF:001225">
    <property type="entry name" value="ATP-binding cassette sub-family G member"/>
    <property type="match status" value="1"/>
</dbReference>
<dbReference type="Gene3D" id="3.40.50.300">
    <property type="entry name" value="P-loop containing nucleotide triphosphate hydrolases"/>
    <property type="match status" value="1"/>
</dbReference>
<dbReference type="InterPro" id="IPR003593">
    <property type="entry name" value="AAA+_ATPase"/>
</dbReference>
<dbReference type="InterPro" id="IPR013525">
    <property type="entry name" value="ABC2_TM"/>
</dbReference>
<dbReference type="InterPro" id="IPR003439">
    <property type="entry name" value="ABC_transporter-like_ATP-bd"/>
</dbReference>
<dbReference type="InterPro" id="IPR017871">
    <property type="entry name" value="ABC_transporter-like_CS"/>
</dbReference>
<dbReference type="InterPro" id="IPR043926">
    <property type="entry name" value="ABCG_dom"/>
</dbReference>
<dbReference type="InterPro" id="IPR050352">
    <property type="entry name" value="ABCG_transporters"/>
</dbReference>
<dbReference type="InterPro" id="IPR027417">
    <property type="entry name" value="P-loop_NTPase"/>
</dbReference>
<dbReference type="InterPro" id="IPR005284">
    <property type="entry name" value="Pigment_permease/Abcg"/>
</dbReference>
<dbReference type="NCBIfam" id="TIGR00955">
    <property type="entry name" value="3a01204"/>
    <property type="match status" value="1"/>
</dbReference>
<dbReference type="PANTHER" id="PTHR48041">
    <property type="entry name" value="ABC TRANSPORTER G FAMILY MEMBER 28"/>
    <property type="match status" value="1"/>
</dbReference>
<dbReference type="PANTHER" id="PTHR48041:SF129">
    <property type="entry name" value="PROTEIN WHITE"/>
    <property type="match status" value="1"/>
</dbReference>
<dbReference type="Pfam" id="PF01061">
    <property type="entry name" value="ABC2_membrane"/>
    <property type="match status" value="1"/>
</dbReference>
<dbReference type="Pfam" id="PF19055">
    <property type="entry name" value="ABC2_membrane_7"/>
    <property type="match status" value="1"/>
</dbReference>
<dbReference type="Pfam" id="PF00005">
    <property type="entry name" value="ABC_tran"/>
    <property type="match status" value="1"/>
</dbReference>
<dbReference type="SMART" id="SM00382">
    <property type="entry name" value="AAA"/>
    <property type="match status" value="1"/>
</dbReference>
<dbReference type="SUPFAM" id="SSF52540">
    <property type="entry name" value="P-loop containing nucleoside triphosphate hydrolases"/>
    <property type="match status" value="1"/>
</dbReference>
<dbReference type="PROSITE" id="PS00211">
    <property type="entry name" value="ABC_TRANSPORTER_1"/>
    <property type="match status" value="1"/>
</dbReference>
<dbReference type="PROSITE" id="PS50893">
    <property type="entry name" value="ABC_TRANSPORTER_2"/>
    <property type="match status" value="1"/>
</dbReference>
<organism>
    <name type="scientific">Ceratitis capitata</name>
    <name type="common">Mediterranean fruit fly</name>
    <name type="synonym">Tephritis capitata</name>
    <dbReference type="NCBI Taxonomy" id="7213"/>
    <lineage>
        <taxon>Eukaryota</taxon>
        <taxon>Metazoa</taxon>
        <taxon>Ecdysozoa</taxon>
        <taxon>Arthropoda</taxon>
        <taxon>Hexapoda</taxon>
        <taxon>Insecta</taxon>
        <taxon>Pterygota</taxon>
        <taxon>Neoptera</taxon>
        <taxon>Endopterygota</taxon>
        <taxon>Diptera</taxon>
        <taxon>Brachycera</taxon>
        <taxon>Muscomorpha</taxon>
        <taxon>Tephritoidea</taxon>
        <taxon>Tephritidae</taxon>
        <taxon>Ceratitis</taxon>
        <taxon>Ceratitis</taxon>
    </lineage>
</organism>
<keyword id="KW-0067">ATP-binding</keyword>
<keyword id="KW-0325">Glycoprotein</keyword>
<keyword id="KW-0472">Membrane</keyword>
<keyword id="KW-0547">Nucleotide-binding</keyword>
<keyword id="KW-0608">Pigment</keyword>
<keyword id="KW-0812">Transmembrane</keyword>
<keyword id="KW-1133">Transmembrane helix</keyword>
<keyword id="KW-0813">Transport</keyword>
<feature type="chain" id="PRO_0000093381" description="Protein white">
    <location>
        <begin position="1"/>
        <end position="679"/>
    </location>
</feature>
<feature type="transmembrane region" description="Helical" evidence="1">
    <location>
        <begin position="427"/>
        <end position="445"/>
    </location>
</feature>
<feature type="transmembrane region" description="Helical" evidence="1">
    <location>
        <begin position="457"/>
        <end position="477"/>
    </location>
</feature>
<feature type="transmembrane region" description="Helical" evidence="1">
    <location>
        <begin position="507"/>
        <end position="525"/>
    </location>
</feature>
<feature type="transmembrane region" description="Helical" evidence="1">
    <location>
        <begin position="534"/>
        <end position="555"/>
    </location>
</feature>
<feature type="transmembrane region" description="Helical" evidence="1">
    <location>
        <begin position="568"/>
        <end position="586"/>
    </location>
</feature>
<feature type="transmembrane region" description="Helical" evidence="1">
    <location>
        <begin position="651"/>
        <end position="670"/>
    </location>
</feature>
<feature type="domain" description="ABC transporter" evidence="2">
    <location>
        <begin position="84"/>
        <end position="332"/>
    </location>
</feature>
<feature type="region of interest" description="Disordered" evidence="3">
    <location>
        <begin position="1"/>
        <end position="34"/>
    </location>
</feature>
<feature type="compositionally biased region" description="Polar residues" evidence="3">
    <location>
        <begin position="15"/>
        <end position="34"/>
    </location>
</feature>
<feature type="binding site" evidence="2">
    <location>
        <begin position="121"/>
        <end position="128"/>
    </location>
    <ligand>
        <name>ATP</name>
        <dbReference type="ChEBI" id="CHEBI:30616"/>
    </ligand>
</feature>
<feature type="glycosylation site" description="N-linked (GlcNAc...) asparagine" evidence="1">
    <location>
        <position position="628"/>
    </location>
</feature>
<feature type="glycosylation site" description="N-linked (GlcNAc...) asparagine" evidence="1">
    <location>
        <position position="643"/>
    </location>
</feature>